<evidence type="ECO:0000250" key="1">
    <source>
        <dbReference type="UniProtKB" id="O35144"/>
    </source>
</evidence>
<evidence type="ECO:0000250" key="2">
    <source>
        <dbReference type="UniProtKB" id="Q15554"/>
    </source>
</evidence>
<evidence type="ECO:0000255" key="3"/>
<evidence type="ECO:0000255" key="4">
    <source>
        <dbReference type="PROSITE-ProRule" id="PRU00625"/>
    </source>
</evidence>
<evidence type="ECO:0000256" key="5">
    <source>
        <dbReference type="SAM" id="MobiDB-lite"/>
    </source>
</evidence>
<evidence type="ECO:0000269" key="6">
    <source>
    </source>
</evidence>
<evidence type="ECO:0000269" key="7">
    <source>
    </source>
</evidence>
<evidence type="ECO:0000305" key="8"/>
<reference key="1">
    <citation type="journal article" date="1999" name="Gene">
        <title>Cloning and characterisation of the chicken gene encoding the telomeric protein TRF2.</title>
        <authorList>
            <person name="Konrad J.P."/>
            <person name="Mills W."/>
            <person name="Easty D.J."/>
            <person name="Farr C.J."/>
        </authorList>
    </citation>
    <scope>NUCLEOTIDE SEQUENCE [MRNA] OF 2-718</scope>
    <scope>VARIANT VAL-438</scope>
    <scope>TISSUE SPECIFICITY</scope>
    <source>
        <strain>White leghorn</strain>
        <tissue>Embryo</tissue>
    </source>
</reference>
<reference key="2">
    <citation type="submission" date="2004-05" db="EMBL/GenBank/DDBJ databases">
        <authorList>
            <person name="Boardman P.E."/>
            <person name="Bonfield J.K."/>
            <person name="Brown W.R.A."/>
            <person name="Carder C."/>
            <person name="Chalk S.E."/>
            <person name="Croning M.D.R."/>
            <person name="Davies R.M."/>
            <person name="Francis M.D."/>
            <person name="Grafham D.V."/>
            <person name="Hubbard S.J."/>
            <person name="Humphray S.J."/>
            <person name="Hunt P.J."/>
            <person name="Maddison M."/>
            <person name="McLaren S.R."/>
            <person name="Niblett D."/>
            <person name="Overton I.M."/>
            <person name="Rogers J."/>
            <person name="Scott C.E."/>
            <person name="Taylor R.G."/>
            <person name="Tickle C."/>
            <person name="Wilson S.A."/>
        </authorList>
    </citation>
    <scope>NUCLEOTIDE SEQUENCE [MRNA] OF 1-132</scope>
</reference>
<reference key="3">
    <citation type="journal article" date="2003" name="Gene">
        <title>The telomeric protein Rap1 is conserved in vertebrates and is expressed from a bidirectional promoter positioned between the Rap1 and KARS genes.</title>
        <authorList>
            <person name="Tan M."/>
            <person name="Wei C."/>
            <person name="Price C.M."/>
        </authorList>
    </citation>
    <scope>INTERACTION WITH TERF2IP</scope>
</reference>
<organism>
    <name type="scientific">Gallus gallus</name>
    <name type="common">Chicken</name>
    <dbReference type="NCBI Taxonomy" id="9031"/>
    <lineage>
        <taxon>Eukaryota</taxon>
        <taxon>Metazoa</taxon>
        <taxon>Chordata</taxon>
        <taxon>Craniata</taxon>
        <taxon>Vertebrata</taxon>
        <taxon>Euteleostomi</taxon>
        <taxon>Archelosauria</taxon>
        <taxon>Archosauria</taxon>
        <taxon>Dinosauria</taxon>
        <taxon>Saurischia</taxon>
        <taxon>Theropoda</taxon>
        <taxon>Coelurosauria</taxon>
        <taxon>Aves</taxon>
        <taxon>Neognathae</taxon>
        <taxon>Galloanserae</taxon>
        <taxon>Galliformes</taxon>
        <taxon>Phasianidae</taxon>
        <taxon>Phasianinae</taxon>
        <taxon>Gallus</taxon>
    </lineage>
</organism>
<feature type="chain" id="PRO_0000197133" description="Telomeric repeat-binding factor 2">
    <location>
        <begin position="1"/>
        <end position="718"/>
    </location>
</feature>
<feature type="repeat" description="1">
    <location>
        <begin position="257"/>
        <end position="269"/>
    </location>
</feature>
<feature type="repeat" description="2">
    <location>
        <begin position="270"/>
        <end position="282"/>
    </location>
</feature>
<feature type="repeat" description="3">
    <location>
        <begin position="283"/>
        <end position="295"/>
    </location>
</feature>
<feature type="repeat" description="4">
    <location>
        <begin position="296"/>
        <end position="308"/>
    </location>
</feature>
<feature type="repeat" description="5">
    <location>
        <begin position="309"/>
        <end position="321"/>
    </location>
</feature>
<feature type="repeat" description="6">
    <location>
        <begin position="322"/>
        <end position="334"/>
    </location>
</feature>
<feature type="repeat" description="7">
    <location>
        <begin position="335"/>
        <end position="347"/>
    </location>
</feature>
<feature type="repeat" description="8">
    <location>
        <begin position="348"/>
        <end position="360"/>
    </location>
</feature>
<feature type="repeat" description="9">
    <location>
        <begin position="361"/>
        <end position="373"/>
    </location>
</feature>
<feature type="repeat" description="10">
    <location>
        <begin position="374"/>
        <end position="386"/>
    </location>
</feature>
<feature type="repeat" description="11">
    <location>
        <begin position="387"/>
        <end position="399"/>
    </location>
</feature>
<feature type="repeat" description="12">
    <location>
        <begin position="400"/>
        <end position="412"/>
    </location>
</feature>
<feature type="repeat" description="13">
    <location>
        <begin position="413"/>
        <end position="425"/>
    </location>
</feature>
<feature type="repeat" description="14">
    <location>
        <begin position="426"/>
        <end position="438"/>
    </location>
</feature>
<feature type="repeat" description="15">
    <location>
        <begin position="439"/>
        <end position="451"/>
    </location>
</feature>
<feature type="domain" description="HTH myb-type" evidence="4">
    <location>
        <begin position="664"/>
        <end position="717"/>
    </location>
</feature>
<feature type="DNA-binding region" description="H-T-H motif" evidence="4">
    <location>
        <begin position="688"/>
        <end position="713"/>
    </location>
</feature>
<feature type="region of interest" description="Disordered" evidence="5">
    <location>
        <begin position="1"/>
        <end position="22"/>
    </location>
</feature>
<feature type="region of interest" description="TRFH dimerization">
    <location>
        <begin position="24"/>
        <end position="220"/>
    </location>
</feature>
<feature type="region of interest" description="Disordered" evidence="5">
    <location>
        <begin position="219"/>
        <end position="286"/>
    </location>
</feature>
<feature type="region of interest" description="15 X 13 AA approximate tandem repeats">
    <location>
        <begin position="257"/>
        <end position="451"/>
    </location>
</feature>
<feature type="region of interest" description="Disordered" evidence="5">
    <location>
        <begin position="342"/>
        <end position="455"/>
    </location>
</feature>
<feature type="region of interest" description="Disordered" evidence="5">
    <location>
        <begin position="524"/>
        <end position="641"/>
    </location>
</feature>
<feature type="short sequence motif" description="Nuclear localization signal" evidence="3">
    <location>
        <begin position="545"/>
        <end position="550"/>
    </location>
</feature>
<feature type="compositionally biased region" description="Basic and acidic residues" evidence="5">
    <location>
        <begin position="8"/>
        <end position="22"/>
    </location>
</feature>
<feature type="compositionally biased region" description="Basic and acidic residues" evidence="5">
    <location>
        <begin position="219"/>
        <end position="228"/>
    </location>
</feature>
<feature type="compositionally biased region" description="Basic and acidic residues" evidence="5">
    <location>
        <begin position="405"/>
        <end position="425"/>
    </location>
</feature>
<feature type="compositionally biased region" description="Polar residues" evidence="5">
    <location>
        <begin position="533"/>
        <end position="543"/>
    </location>
</feature>
<feature type="compositionally biased region" description="Low complexity" evidence="5">
    <location>
        <begin position="584"/>
        <end position="595"/>
    </location>
</feature>
<feature type="compositionally biased region" description="Polar residues" evidence="5">
    <location>
        <begin position="615"/>
        <end position="630"/>
    </location>
</feature>
<feature type="sequence variant" evidence="6">
    <original>A</original>
    <variation>V</variation>
    <location>
        <position position="438"/>
    </location>
</feature>
<feature type="sequence conflict" description="In Ref. 2; CR406218." evidence="8" ref="2">
    <original>IHKVLKEAAVIVCIKNKEFSKALAVLKRHMEKDTG</original>
    <variation>LHSLWFQETEMDSTGKRVDQRRSEEVWRREVEDHF</variation>
    <location>
        <begin position="128"/>
        <end position="162"/>
    </location>
</feature>
<gene>
    <name type="primary">TERF2</name>
    <name type="synonym">TRF2</name>
</gene>
<proteinExistence type="evidence at protein level"/>
<sequence>MAAKRSRAAMEEQEKTSTRSDDREQAVNRWVLQFYFHQAVAAYRAGRNRDFRQLRDVMQALLVRPLEREPAVAQMLRVMQFLSRIEEGENLDCTFDKETELTPLESAIGILQLIAKEFSVPEKKIELIHKVLKEAAVIVCIKNKEFSKALAVLKRHMEKDTGNQKKRTELQTIIREKNRAHPIIRDFSYVNFQQYMFQFLKTYVDTSEPLLVTMMKSLNSERAEEPKRSSVTPESPSRTEDQEEAYEPLRRVKHSVGTLRRAETAGGVAGAPSCPEMAKDPTGAPEHVGTVKDAVRAPCPAESTEDSQGTPRCAETARDVMGAPSPSEMTKDLLGAPKCTETARDVVRAPSPAESTKDPVGTPGHAETARDVARAPSPAETTKNLPGAPECADTVKNTVRAPSPAERRKDLVRAPKRAETARDVVRAPSPAERVKDTAGASEPMKSASYPTASQPRIAAVKSSKVFSVPVEISEQPAAAAPVHAGVSSRDLERTPFRTVTTYGISVLREAFKMLSNSPDSDALFNKLDETDLPSPQQMSPSVSHRTKRRKEEKNQGSETLDSPEIPHKSKRLFTISKMIMDQGSQCSKSSESPDSSQERVVSSAYRPVQELPDQPVSTKRSSQQRWNSSYGEERKDSWSDEDELFTDAALTETSSNNSTVYGSKKQKWTVQESEWIKDGVRKYGEGRWKTISEKYPFQNRTSVQIKDRYRTMKKLGIA</sequence>
<dbReference type="EMBL" id="AJ133783">
    <property type="protein sequence ID" value="CAB56220.1"/>
    <property type="molecule type" value="mRNA"/>
</dbReference>
<dbReference type="EMBL" id="CR406218">
    <property type="status" value="NOT_ANNOTATED_CDS"/>
    <property type="molecule type" value="mRNA"/>
</dbReference>
<dbReference type="RefSeq" id="NP_001258821.1">
    <property type="nucleotide sequence ID" value="NM_001271892.1"/>
</dbReference>
<dbReference type="SMR" id="Q9PU53"/>
<dbReference type="BioGRID" id="675877">
    <property type="interactions" value="1"/>
</dbReference>
<dbReference type="FunCoup" id="Q9PU53">
    <property type="interactions" value="1640"/>
</dbReference>
<dbReference type="STRING" id="9031.ENSGALP00000000930"/>
<dbReference type="PaxDb" id="9031-ENSGALP00000000930"/>
<dbReference type="GeneID" id="395598"/>
<dbReference type="KEGG" id="gga:395598"/>
<dbReference type="CTD" id="7014"/>
<dbReference type="VEuPathDB" id="HostDB:geneid_395598"/>
<dbReference type="eggNOG" id="ENOG502RYHN">
    <property type="taxonomic scope" value="Eukaryota"/>
</dbReference>
<dbReference type="InParanoid" id="Q9PU53"/>
<dbReference type="OrthoDB" id="608866at2759"/>
<dbReference type="PhylomeDB" id="Q9PU53"/>
<dbReference type="Reactome" id="R-GGA-418124">
    <property type="pathway name" value="Telomere maintenance"/>
</dbReference>
<dbReference type="PRO" id="PR:Q9PU53"/>
<dbReference type="Proteomes" id="UP000000539">
    <property type="component" value="Unassembled WGS sequence"/>
</dbReference>
<dbReference type="GO" id="GO:0000781">
    <property type="term" value="C:chromosome, telomeric region"/>
    <property type="evidence" value="ECO:0000250"/>
    <property type="project" value="UniProtKB"/>
</dbReference>
<dbReference type="GO" id="GO:0005654">
    <property type="term" value="C:nucleoplasm"/>
    <property type="evidence" value="ECO:0000304"/>
    <property type="project" value="Reactome"/>
</dbReference>
<dbReference type="GO" id="GO:0070187">
    <property type="term" value="C:shelterin complex"/>
    <property type="evidence" value="ECO:0000318"/>
    <property type="project" value="GO_Central"/>
</dbReference>
<dbReference type="GO" id="GO:0003691">
    <property type="term" value="F:double-stranded telomeric DNA binding"/>
    <property type="evidence" value="ECO:0000250"/>
    <property type="project" value="UniProtKB"/>
</dbReference>
<dbReference type="GO" id="GO:0098505">
    <property type="term" value="F:G-rich strand telomeric DNA binding"/>
    <property type="evidence" value="ECO:0000318"/>
    <property type="project" value="GO_Central"/>
</dbReference>
<dbReference type="GO" id="GO:0042803">
    <property type="term" value="F:protein homodimerization activity"/>
    <property type="evidence" value="ECO:0007669"/>
    <property type="project" value="InterPro"/>
</dbReference>
<dbReference type="GO" id="GO:0042162">
    <property type="term" value="F:telomeric DNA binding"/>
    <property type="evidence" value="ECO:0000250"/>
    <property type="project" value="UniProtKB"/>
</dbReference>
<dbReference type="GO" id="GO:0032208">
    <property type="term" value="P:negative regulation of telomere maintenance via recombination"/>
    <property type="evidence" value="ECO:0000318"/>
    <property type="project" value="GO_Central"/>
</dbReference>
<dbReference type="GO" id="GO:1905839">
    <property type="term" value="P:negative regulation of telomeric D-loop disassembly"/>
    <property type="evidence" value="ECO:0000318"/>
    <property type="project" value="GO_Central"/>
</dbReference>
<dbReference type="GO" id="GO:0031848">
    <property type="term" value="P:protection from non-homologous end joining at telomere"/>
    <property type="evidence" value="ECO:0000318"/>
    <property type="project" value="GO_Central"/>
</dbReference>
<dbReference type="GO" id="GO:0070198">
    <property type="term" value="P:protein localization to chromosome, telomeric region"/>
    <property type="evidence" value="ECO:0000318"/>
    <property type="project" value="GO_Central"/>
</dbReference>
<dbReference type="GO" id="GO:0032210">
    <property type="term" value="P:regulation of telomere maintenance via telomerase"/>
    <property type="evidence" value="ECO:0000318"/>
    <property type="project" value="GO_Central"/>
</dbReference>
<dbReference type="GO" id="GO:0006278">
    <property type="term" value="P:RNA-templated DNA biosynthetic process"/>
    <property type="evidence" value="ECO:0007669"/>
    <property type="project" value="GOC"/>
</dbReference>
<dbReference type="GO" id="GO:0000723">
    <property type="term" value="P:telomere maintenance"/>
    <property type="evidence" value="ECO:0000250"/>
    <property type="project" value="UniProtKB"/>
</dbReference>
<dbReference type="GO" id="GO:0061820">
    <property type="term" value="P:telomeric D-loop disassembly"/>
    <property type="evidence" value="ECO:0000318"/>
    <property type="project" value="GO_Central"/>
</dbReference>
<dbReference type="GO" id="GO:0031627">
    <property type="term" value="P:telomeric loop formation"/>
    <property type="evidence" value="ECO:0000318"/>
    <property type="project" value="GO_Central"/>
</dbReference>
<dbReference type="CDD" id="cd11660">
    <property type="entry name" value="SANT_TRF"/>
    <property type="match status" value="1"/>
</dbReference>
<dbReference type="CDD" id="cd11654">
    <property type="entry name" value="TRF2_RBM"/>
    <property type="match status" value="1"/>
</dbReference>
<dbReference type="CDD" id="cd00280">
    <property type="entry name" value="TRFH"/>
    <property type="match status" value="1"/>
</dbReference>
<dbReference type="FunFam" id="1.10.10.60:FF:000129">
    <property type="entry name" value="Telomeric repeat-binding factor 2"/>
    <property type="match status" value="1"/>
</dbReference>
<dbReference type="FunFam" id="1.25.40.210:FF:000002">
    <property type="entry name" value="Telomeric repeat-binding factor 2"/>
    <property type="match status" value="1"/>
</dbReference>
<dbReference type="Gene3D" id="1.10.10.60">
    <property type="entry name" value="Homeodomain-like"/>
    <property type="match status" value="1"/>
</dbReference>
<dbReference type="Gene3D" id="1.25.40.210">
    <property type="entry name" value="Telomere repeat-binding factor, dimerisation domain"/>
    <property type="match status" value="1"/>
</dbReference>
<dbReference type="InterPro" id="IPR009057">
    <property type="entry name" value="Homeodomain-like_sf"/>
</dbReference>
<dbReference type="InterPro" id="IPR017930">
    <property type="entry name" value="Myb_dom"/>
</dbReference>
<dbReference type="InterPro" id="IPR001005">
    <property type="entry name" value="SANT/Myb"/>
</dbReference>
<dbReference type="InterPro" id="IPR013867">
    <property type="entry name" value="Telomere_rpt-bd_fac_dimer_dom"/>
</dbReference>
<dbReference type="InterPro" id="IPR036507">
    <property type="entry name" value="Telomere_rpt-bd_fac_dimer_sf"/>
</dbReference>
<dbReference type="InterPro" id="IPR030657">
    <property type="entry name" value="TERF2"/>
</dbReference>
<dbReference type="InterPro" id="IPR031902">
    <property type="entry name" value="TERF2_RBM"/>
</dbReference>
<dbReference type="PANTHER" id="PTHR46833:SF1">
    <property type="entry name" value="TELOMERIC REPEAT-BINDING FACTOR 2"/>
    <property type="match status" value="1"/>
</dbReference>
<dbReference type="PANTHER" id="PTHR46833">
    <property type="entry name" value="TELOMERIC REPEAT-BINDING FACTOR 2 TERF2"/>
    <property type="match status" value="1"/>
</dbReference>
<dbReference type="Pfam" id="PF00249">
    <property type="entry name" value="Myb_DNA-binding"/>
    <property type="match status" value="1"/>
</dbReference>
<dbReference type="Pfam" id="PF16772">
    <property type="entry name" value="TERF2_RBM"/>
    <property type="match status" value="1"/>
</dbReference>
<dbReference type="Pfam" id="PF08558">
    <property type="entry name" value="TRF"/>
    <property type="match status" value="1"/>
</dbReference>
<dbReference type="SMART" id="SM00717">
    <property type="entry name" value="SANT"/>
    <property type="match status" value="1"/>
</dbReference>
<dbReference type="SUPFAM" id="SSF46689">
    <property type="entry name" value="Homeodomain-like"/>
    <property type="match status" value="1"/>
</dbReference>
<dbReference type="SUPFAM" id="SSF63600">
    <property type="entry name" value="Telomeric repeat binding factor (TRF) dimerisation domain"/>
    <property type="match status" value="1"/>
</dbReference>
<dbReference type="PROSITE" id="PS51294">
    <property type="entry name" value="HTH_MYB"/>
    <property type="match status" value="1"/>
</dbReference>
<comment type="function">
    <text evidence="1 2">Binds the telomeric double-stranded 5'-TTAGGG-3' repeat and plays a central role in telomere maintenance and protection against end-to-end fusion of chromosomes (By similarity). In addition to its telomeric DNA-binding role, required to recruit a number of factors and enzymes required for telomere protection, including the shelterin complex, TERF2IP/RAP1 and DCLRE1B/Apollo (By similarity). Component of the shelterin complex (telosome) that is involved in the regulation of telomere length and protection (By similarity). Shelterin associates with arrays of double-stranded 5'-TTAGGG-3' repeats added by telomerase and protects chromosome ends; without its protective activity, telomeres are no longer hidden from the DNA damage surveillance and chromosome ends are inappropriately processed by DNA repair pathways (By similarity). Together with DCLRE1B/Apollo, plays a key role in telomeric loop (T loop) formation by generating 3' single-stranded overhang at the leading end telomeres: T loops have been proposed to protect chromosome ends from degradation and repair (By similarity). Required both to recruit DCLRE1B/Apollo to telomeres and activate the exonuclease activity of DCLRE1B/Apollo (By similarity). Together with DCLRE1B/Apollo, required to control the amount of DNA topoisomerase (TOP1, TOP2A and TOP2B) needed for telomere replication during fork passage and prevent aberrant telomere topology (By similarity). Recruits TERF2IP/RAP1 to telomeres, thereby participating in to repressing homology-directed repair (HDR), which can affect telomere length (By similarity).</text>
</comment>
<comment type="subunit">
    <text evidence="2 7">Homodimer (By similarity). Component of the shelterin complex (telosome) (By similarity). Interacts with TERF2IP/RAP1 (PubMed:14659874).</text>
</comment>
<comment type="subcellular location">
    <subcellularLocation>
        <location evidence="4">Nucleus</location>
    </subcellularLocation>
    <subcellularLocation>
        <location evidence="2">Chromosome</location>
        <location evidence="2">Telomere</location>
    </subcellularLocation>
    <text evidence="2">Colocalizes with telomeric DNA in interphase cells and is located at chromosome ends during metaphase.</text>
</comment>
<comment type="tissue specificity">
    <text evidence="6">Highly expressed in embryo.</text>
</comment>
<name>TERF2_CHICK</name>
<accession>Q9PU53</accession>
<protein>
    <recommendedName>
        <fullName>Telomeric repeat-binding factor 2</fullName>
    </recommendedName>
    <alternativeName>
        <fullName>TTAGGG repeat-binding factor 2</fullName>
    </alternativeName>
    <alternativeName>
        <fullName>Telomeric DNA-binding protein</fullName>
    </alternativeName>
</protein>
<keyword id="KW-0131">Cell cycle</keyword>
<keyword id="KW-0158">Chromosome</keyword>
<keyword id="KW-0238">DNA-binding</keyword>
<keyword id="KW-0539">Nucleus</keyword>
<keyword id="KW-1185">Reference proteome</keyword>
<keyword id="KW-0677">Repeat</keyword>
<keyword id="KW-0779">Telomere</keyword>